<name>Y4QG_SINFN</name>
<feature type="chain" id="PRO_0000120538" description="Uncharacterized aminotransferase y4qG">
    <location>
        <begin position="1"/>
        <end position="448"/>
    </location>
</feature>
<feature type="modified residue" description="N6-(pyridoxal phosphate)lysine" evidence="1">
    <location>
        <position position="297"/>
    </location>
</feature>
<sequence length="448" mass="49272">MWHWHRFQEHEARRSDAIVLLRKIMSNESKSNSLYAFESLESNVRFYSRSFPVVFEKAAGAILHDESGREFIDFLSGSGVLNYGHNDPYFLDEATQYLRSNGIIHGLDMATPAKREFMECFDAIILRPRGLTYKFQFCGPTGANAVEAALKLARKATGRHSIVSFTNGFHGMSLGALAVTGNRYYRDAAGFPPAGVAFMPYDGYWGADNDTSEYLDKVLADASSGVDVPAAIILETVQGEGGINAARKEWLQSIQRICRSHGILLIVDDIQAGCGRAGNFFSFEFAGLSPDVVVLSKSISGCGLPLSLLLLKPELDVWRPGEHNGTFRGNNLAFVTGAAALRKYWTNDALSARVMETGRIIAERLRQVAQTNRARSLSVRGRGMMLGLNCGTGKLAERIVRKAFEEGLVVERCGAEDQVIKLLPPLTTDEQTLRRGLDILHKSVAASI</sequence>
<keyword id="KW-0032">Aminotransferase</keyword>
<keyword id="KW-0614">Plasmid</keyword>
<keyword id="KW-0663">Pyridoxal phosphate</keyword>
<keyword id="KW-1185">Reference proteome</keyword>
<keyword id="KW-0808">Transferase</keyword>
<proteinExistence type="inferred from homology"/>
<organism>
    <name type="scientific">Sinorhizobium fredii (strain NBRC 101917 / NGR234)</name>
    <dbReference type="NCBI Taxonomy" id="394"/>
    <lineage>
        <taxon>Bacteria</taxon>
        <taxon>Pseudomonadati</taxon>
        <taxon>Pseudomonadota</taxon>
        <taxon>Alphaproteobacteria</taxon>
        <taxon>Hyphomicrobiales</taxon>
        <taxon>Rhizobiaceae</taxon>
        <taxon>Sinorhizobium/Ensifer group</taxon>
        <taxon>Sinorhizobium</taxon>
    </lineage>
</organism>
<accession>P55628</accession>
<geneLocation type="plasmid">
    <name>sym pNGR234a</name>
</geneLocation>
<reference key="1">
    <citation type="journal article" date="1997" name="Nature">
        <title>Molecular basis of symbiosis between Rhizobium and legumes.</title>
        <authorList>
            <person name="Freiberg C.A."/>
            <person name="Fellay R."/>
            <person name="Bairoch A."/>
            <person name="Broughton W.J."/>
            <person name="Rosenthal A."/>
            <person name="Perret X."/>
        </authorList>
    </citation>
    <scope>NUCLEOTIDE SEQUENCE [LARGE SCALE GENOMIC DNA]</scope>
    <source>
        <strain>NBRC 101917 / NGR234</strain>
    </source>
</reference>
<reference key="2">
    <citation type="journal article" date="2009" name="Appl. Environ. Microbiol.">
        <title>Rhizobium sp. strain NGR234 possesses a remarkable number of secretion systems.</title>
        <authorList>
            <person name="Schmeisser C."/>
            <person name="Liesegang H."/>
            <person name="Krysciak D."/>
            <person name="Bakkou N."/>
            <person name="Le Quere A."/>
            <person name="Wollherr A."/>
            <person name="Heinemeyer I."/>
            <person name="Morgenstern B."/>
            <person name="Pommerening-Roeser A."/>
            <person name="Flores M."/>
            <person name="Palacios R."/>
            <person name="Brenner S."/>
            <person name="Gottschalk G."/>
            <person name="Schmitz R.A."/>
            <person name="Broughton W.J."/>
            <person name="Perret X."/>
            <person name="Strittmatter A.W."/>
            <person name="Streit W.R."/>
        </authorList>
    </citation>
    <scope>NUCLEOTIDE SEQUENCE [LARGE SCALE GENOMIC DNA]</scope>
    <source>
        <strain>NBRC 101917 / NGR234</strain>
    </source>
</reference>
<comment type="cofactor">
    <cofactor evidence="2">
        <name>pyridoxal 5'-phosphate</name>
        <dbReference type="ChEBI" id="CHEBI:597326"/>
    </cofactor>
</comment>
<comment type="similarity">
    <text evidence="2">Belongs to the class-III pyridoxal-phosphate-dependent aminotransferase family.</text>
</comment>
<protein>
    <recommendedName>
        <fullName>Uncharacterized aminotransferase y4qG</fullName>
        <ecNumber>2.6.1.-</ecNumber>
    </recommendedName>
</protein>
<gene>
    <name type="ordered locus">NGR_a01910</name>
    <name type="ORF">y4qG</name>
</gene>
<evidence type="ECO:0000255" key="1"/>
<evidence type="ECO:0000305" key="2"/>
<dbReference type="EC" id="2.6.1.-"/>
<dbReference type="EMBL" id="U00090">
    <property type="protein sequence ID" value="AAB91831.1"/>
    <property type="molecule type" value="Genomic_DNA"/>
</dbReference>
<dbReference type="RefSeq" id="NP_444034.1">
    <property type="nucleotide sequence ID" value="NC_000914.2"/>
</dbReference>
<dbReference type="SMR" id="P55628"/>
<dbReference type="KEGG" id="rhi:NGR_a01910"/>
<dbReference type="PATRIC" id="fig|394.7.peg.190"/>
<dbReference type="eggNOG" id="COG0160">
    <property type="taxonomic scope" value="Bacteria"/>
</dbReference>
<dbReference type="HOGENOM" id="CLU_016922_10_0_5"/>
<dbReference type="OrthoDB" id="9801834at2"/>
<dbReference type="Proteomes" id="UP000001054">
    <property type="component" value="Plasmid pNGR234a"/>
</dbReference>
<dbReference type="GO" id="GO:0047307">
    <property type="term" value="F:diaminobutyrate-pyruvate transaminase activity"/>
    <property type="evidence" value="ECO:0007669"/>
    <property type="project" value="InterPro"/>
</dbReference>
<dbReference type="GO" id="GO:0030170">
    <property type="term" value="F:pyridoxal phosphate binding"/>
    <property type="evidence" value="ECO:0007669"/>
    <property type="project" value="InterPro"/>
</dbReference>
<dbReference type="GO" id="GO:0019491">
    <property type="term" value="P:ectoine biosynthetic process"/>
    <property type="evidence" value="ECO:0007669"/>
    <property type="project" value="InterPro"/>
</dbReference>
<dbReference type="CDD" id="cd00610">
    <property type="entry name" value="OAT_like"/>
    <property type="match status" value="1"/>
</dbReference>
<dbReference type="Gene3D" id="3.90.1150.10">
    <property type="entry name" value="Aspartate Aminotransferase, domain 1"/>
    <property type="match status" value="1"/>
</dbReference>
<dbReference type="Gene3D" id="3.40.640.10">
    <property type="entry name" value="Type I PLP-dependent aspartate aminotransferase-like (Major domain)"/>
    <property type="match status" value="1"/>
</dbReference>
<dbReference type="InterPro" id="IPR005814">
    <property type="entry name" value="Aminotrans_3"/>
</dbReference>
<dbReference type="InterPro" id="IPR049704">
    <property type="entry name" value="Aminotrans_3_PPA_site"/>
</dbReference>
<dbReference type="InterPro" id="IPR004637">
    <property type="entry name" value="Dat"/>
</dbReference>
<dbReference type="InterPro" id="IPR012773">
    <property type="entry name" value="Ectoine_EctB"/>
</dbReference>
<dbReference type="InterPro" id="IPR015424">
    <property type="entry name" value="PyrdxlP-dep_Trfase"/>
</dbReference>
<dbReference type="InterPro" id="IPR015421">
    <property type="entry name" value="PyrdxlP-dep_Trfase_major"/>
</dbReference>
<dbReference type="InterPro" id="IPR015422">
    <property type="entry name" value="PyrdxlP-dep_Trfase_small"/>
</dbReference>
<dbReference type="NCBIfam" id="TIGR00709">
    <property type="entry name" value="dat"/>
    <property type="match status" value="1"/>
</dbReference>
<dbReference type="NCBIfam" id="TIGR02407">
    <property type="entry name" value="ectoine_ectB"/>
    <property type="match status" value="1"/>
</dbReference>
<dbReference type="NCBIfam" id="NF006733">
    <property type="entry name" value="PRK09264.1"/>
    <property type="match status" value="1"/>
</dbReference>
<dbReference type="PANTHER" id="PTHR43552">
    <property type="entry name" value="DIAMINOBUTYRATE--2-OXOGLUTARATE AMINOTRANSFERASE"/>
    <property type="match status" value="1"/>
</dbReference>
<dbReference type="PANTHER" id="PTHR43552:SF2">
    <property type="entry name" value="DIAMINOBUTYRATE--2-OXOGLUTARATE TRANSAMINASE"/>
    <property type="match status" value="1"/>
</dbReference>
<dbReference type="Pfam" id="PF00202">
    <property type="entry name" value="Aminotran_3"/>
    <property type="match status" value="1"/>
</dbReference>
<dbReference type="PIRSF" id="PIRSF000521">
    <property type="entry name" value="Transaminase_4ab_Lys_Orn"/>
    <property type="match status" value="1"/>
</dbReference>
<dbReference type="SUPFAM" id="SSF53383">
    <property type="entry name" value="PLP-dependent transferases"/>
    <property type="match status" value="1"/>
</dbReference>
<dbReference type="PROSITE" id="PS00600">
    <property type="entry name" value="AA_TRANSFER_CLASS_3"/>
    <property type="match status" value="1"/>
</dbReference>